<organism>
    <name type="scientific">Gallus gallus</name>
    <name type="common">Chicken</name>
    <dbReference type="NCBI Taxonomy" id="9031"/>
    <lineage>
        <taxon>Eukaryota</taxon>
        <taxon>Metazoa</taxon>
        <taxon>Chordata</taxon>
        <taxon>Craniata</taxon>
        <taxon>Vertebrata</taxon>
        <taxon>Euteleostomi</taxon>
        <taxon>Archelosauria</taxon>
        <taxon>Archosauria</taxon>
        <taxon>Dinosauria</taxon>
        <taxon>Saurischia</taxon>
        <taxon>Theropoda</taxon>
        <taxon>Coelurosauria</taxon>
        <taxon>Aves</taxon>
        <taxon>Neognathae</taxon>
        <taxon>Galloanserae</taxon>
        <taxon>Galliformes</taxon>
        <taxon>Phasianidae</taxon>
        <taxon>Phasianinae</taxon>
        <taxon>Gallus</taxon>
    </lineage>
</organism>
<dbReference type="EC" id="2.4.1.122" evidence="4"/>
<dbReference type="EMBL" id="AJ851683">
    <property type="protein sequence ID" value="CAH65317.1"/>
    <property type="molecule type" value="mRNA"/>
</dbReference>
<dbReference type="RefSeq" id="NP_001012575.1">
    <property type="nucleotide sequence ID" value="NM_001012557.2"/>
</dbReference>
<dbReference type="RefSeq" id="XP_015136885.1">
    <property type="nucleotide sequence ID" value="XM_015281399.4"/>
</dbReference>
<dbReference type="RefSeq" id="XP_040537082.1">
    <property type="nucleotide sequence ID" value="XM_040681148.1"/>
</dbReference>
<dbReference type="RefSeq" id="XP_040537099.1">
    <property type="nucleotide sequence ID" value="XM_040681165.2"/>
</dbReference>
<dbReference type="RefSeq" id="XP_046766993.1">
    <property type="nucleotide sequence ID" value="XM_046911037.1"/>
</dbReference>
<dbReference type="RefSeq" id="XP_046766994.1">
    <property type="nucleotide sequence ID" value="XM_046911038.1"/>
</dbReference>
<dbReference type="RefSeq" id="XP_046766995.1">
    <property type="nucleotide sequence ID" value="XM_046911039.1"/>
</dbReference>
<dbReference type="SMR" id="Q5F3G7"/>
<dbReference type="FunCoup" id="Q5F3G7">
    <property type="interactions" value="504"/>
</dbReference>
<dbReference type="STRING" id="9031.ENSGALP00000067511"/>
<dbReference type="CAZy" id="GT31">
    <property type="family name" value="Glycosyltransferase Family 31"/>
</dbReference>
<dbReference type="PaxDb" id="9031-ENSGALP00000015853"/>
<dbReference type="Ensembl" id="ENSGALT00010007928.1">
    <property type="protein sequence ID" value="ENSGALP00010004761.1"/>
    <property type="gene ID" value="ENSGALG00010003406.1"/>
</dbReference>
<dbReference type="GeneID" id="420575"/>
<dbReference type="KEGG" id="gga:420575"/>
<dbReference type="CTD" id="56913"/>
<dbReference type="VEuPathDB" id="HostDB:geneid_420575"/>
<dbReference type="eggNOG" id="KOG2246">
    <property type="taxonomic scope" value="Eukaryota"/>
</dbReference>
<dbReference type="GeneTree" id="ENSGT00940000155000"/>
<dbReference type="HOGENOM" id="CLU_035857_0_0_1"/>
<dbReference type="InParanoid" id="Q5F3G7"/>
<dbReference type="OrthoDB" id="414175at2759"/>
<dbReference type="PhylomeDB" id="Q5F3G7"/>
<dbReference type="TreeFam" id="TF317293"/>
<dbReference type="Reactome" id="R-GGA-913709">
    <property type="pathway name" value="O-linked glycosylation of mucins"/>
</dbReference>
<dbReference type="UniPathway" id="UPA00378"/>
<dbReference type="PRO" id="PR:Q5F3G7"/>
<dbReference type="Proteomes" id="UP000000539">
    <property type="component" value="Chromosome 2"/>
</dbReference>
<dbReference type="Bgee" id="ENSGALG00000009752">
    <property type="expression patterns" value="Expressed in spermatocyte and 14 other cell types or tissues"/>
</dbReference>
<dbReference type="GO" id="GO:0016020">
    <property type="term" value="C:membrane"/>
    <property type="evidence" value="ECO:0000250"/>
    <property type="project" value="UniProtKB"/>
</dbReference>
<dbReference type="GO" id="GO:0016263">
    <property type="term" value="F:glycoprotein-N-acetylgalactosamine 3-beta-galactosyltransferase activity"/>
    <property type="evidence" value="ECO:0000250"/>
    <property type="project" value="UniProtKB"/>
</dbReference>
<dbReference type="GO" id="GO:0046872">
    <property type="term" value="F:metal ion binding"/>
    <property type="evidence" value="ECO:0007669"/>
    <property type="project" value="UniProtKB-KW"/>
</dbReference>
<dbReference type="GO" id="GO:0000166">
    <property type="term" value="F:nucleotide binding"/>
    <property type="evidence" value="ECO:0007669"/>
    <property type="project" value="UniProtKB-KW"/>
</dbReference>
<dbReference type="GO" id="GO:0001525">
    <property type="term" value="P:angiogenesis"/>
    <property type="evidence" value="ECO:0000250"/>
    <property type="project" value="UniProtKB"/>
</dbReference>
<dbReference type="GO" id="GO:0001822">
    <property type="term" value="P:kidney development"/>
    <property type="evidence" value="ECO:0000250"/>
    <property type="project" value="UniProtKB"/>
</dbReference>
<dbReference type="GO" id="GO:0006486">
    <property type="term" value="P:protein glycosylation"/>
    <property type="evidence" value="ECO:0007669"/>
    <property type="project" value="UniProtKB-UniPathway"/>
</dbReference>
<dbReference type="FunFam" id="3.90.550.50:FF:000007">
    <property type="entry name" value="Glycoprotein-N-acetylgalactosamine 3-beta-galactosyltransferase 1"/>
    <property type="match status" value="1"/>
</dbReference>
<dbReference type="Gene3D" id="3.90.550.50">
    <property type="match status" value="1"/>
</dbReference>
<dbReference type="InterPro" id="IPR026050">
    <property type="entry name" value="C1GALT1/C1GALT1_chp1"/>
</dbReference>
<dbReference type="InterPro" id="IPR003378">
    <property type="entry name" value="Fringe-like_glycosylTrfase"/>
</dbReference>
<dbReference type="PANTHER" id="PTHR23033">
    <property type="entry name" value="BETA1,3-GALACTOSYLTRANSFERASE"/>
    <property type="match status" value="1"/>
</dbReference>
<dbReference type="PANTHER" id="PTHR23033:SF13">
    <property type="entry name" value="GLYCOPROTEIN-N-ACETYLGALACTOSAMINE 3-BETA-GALACTOSYLTRANSFERASE 1"/>
    <property type="match status" value="1"/>
</dbReference>
<dbReference type="Pfam" id="PF02434">
    <property type="entry name" value="Fringe"/>
    <property type="match status" value="1"/>
</dbReference>
<accession>Q5F3G7</accession>
<name>C1GLT_CHICK</name>
<keyword id="KW-1015">Disulfide bond</keyword>
<keyword id="KW-0328">Glycosyltransferase</keyword>
<keyword id="KW-0464">Manganese</keyword>
<keyword id="KW-0472">Membrane</keyword>
<keyword id="KW-0479">Metal-binding</keyword>
<keyword id="KW-0547">Nucleotide-binding</keyword>
<keyword id="KW-1185">Reference proteome</keyword>
<keyword id="KW-0735">Signal-anchor</keyword>
<keyword id="KW-0808">Transferase</keyword>
<keyword id="KW-0812">Transmembrane</keyword>
<keyword id="KW-1133">Transmembrane helix</keyword>
<comment type="function">
    <text evidence="4">Glycosyltransferase that generates the core 1 O-glycan Gal-beta1-3GalNAc-alpha1-Ser/Thr (T antigen), which is a precursor for many extended O-glycans in glycoproteins.</text>
</comment>
<comment type="catalytic activity">
    <reaction evidence="4">
        <text>an N-acetyl-alpha-D-galactosaminyl derivative + UDP-alpha-D-galactose = a beta-D-galactosyl-(1-&gt;3)-N-acetyl-alpha-D-galactosaminyl derivative + UDP + H(+)</text>
        <dbReference type="Rhea" id="RHEA:15621"/>
        <dbReference type="ChEBI" id="CHEBI:15378"/>
        <dbReference type="ChEBI" id="CHEBI:28257"/>
        <dbReference type="ChEBI" id="CHEBI:58223"/>
        <dbReference type="ChEBI" id="CHEBI:66914"/>
        <dbReference type="ChEBI" id="CHEBI:133470"/>
        <dbReference type="EC" id="2.4.1.122"/>
    </reaction>
</comment>
<comment type="cofactor">
    <cofactor evidence="3">
        <name>Mn(2+)</name>
        <dbReference type="ChEBI" id="CHEBI:29035"/>
    </cofactor>
</comment>
<comment type="pathway">
    <text evidence="4">Protein modification; protein glycosylation.</text>
</comment>
<comment type="subunit">
    <text evidence="3">Homodimer; disulfide-linked.</text>
</comment>
<comment type="subcellular location">
    <subcellularLocation>
        <location evidence="3">Membrane</location>
        <topology evidence="1">Single-pass type II membrane protein</topology>
    </subcellularLocation>
</comment>
<comment type="similarity">
    <text evidence="7">Belongs to the glycosyltransferase 31 family. Beta3-Gal-T subfamily.</text>
</comment>
<evidence type="ECO:0000250" key="1"/>
<evidence type="ECO:0000250" key="2">
    <source>
        <dbReference type="UniProtKB" id="Q7K237"/>
    </source>
</evidence>
<evidence type="ECO:0000250" key="3">
    <source>
        <dbReference type="UniProtKB" id="Q9JJ05"/>
    </source>
</evidence>
<evidence type="ECO:0000250" key="4">
    <source>
        <dbReference type="UniProtKB" id="Q9NS00"/>
    </source>
</evidence>
<evidence type="ECO:0000255" key="5"/>
<evidence type="ECO:0000256" key="6">
    <source>
        <dbReference type="SAM" id="MobiDB-lite"/>
    </source>
</evidence>
<evidence type="ECO:0000305" key="7"/>
<protein>
    <recommendedName>
        <fullName>Glycoprotein-N-acetylgalactosamine 3-beta-galactosyltransferase 1</fullName>
        <ecNumber evidence="4">2.4.1.122</ecNumber>
    </recommendedName>
    <alternativeName>
        <fullName>Core 1 O-glycan T-synthase</fullName>
    </alternativeName>
    <alternativeName>
        <fullName>Core 1 UDP-galactose:N-acetylgalactosamine-alpha-R beta 1,3-galactosyltransferase 1</fullName>
    </alternativeName>
    <alternativeName>
        <fullName>Core 1 beta1,3-galactosyltransferase 1</fullName>
        <shortName>C1GalT1</shortName>
        <shortName>Core 1 beta3-Gal-T1</shortName>
    </alternativeName>
</protein>
<reference key="1">
    <citation type="journal article" date="2005" name="Genome Biol.">
        <title>Full-length cDNAs from chicken bursal lymphocytes to facilitate gene function analysis.</title>
        <authorList>
            <person name="Caldwell R.B."/>
            <person name="Kierzek A.M."/>
            <person name="Arakawa H."/>
            <person name="Bezzubov Y."/>
            <person name="Zaim J."/>
            <person name="Fiedler P."/>
            <person name="Kutter S."/>
            <person name="Blagodatski A."/>
            <person name="Kostovska D."/>
            <person name="Koter M."/>
            <person name="Plachy J."/>
            <person name="Carninci P."/>
            <person name="Hayashizaki Y."/>
            <person name="Buerstedde J.-M."/>
        </authorList>
    </citation>
    <scope>NUCLEOTIDE SEQUENCE [LARGE SCALE MRNA]</scope>
    <source>
        <strain>CB</strain>
        <tissue>Bursa of Fabricius</tissue>
    </source>
</reference>
<sequence>MASSKSLMNLLTFSFGSAIGFFLCYLLFSMILEEQVEIQPHILHNDPHGQHSEDTDNNQLQGQMNFNADSGQHRDENRNIADGLYEKVKILCWVMTGPQNLEKKARHVKATWAQRCNKILFMSSEENKDFPTVGLETKEGRDQLYWKTIKAFQYVYDHYFDDADWFMKADDDTYVILDNLRWLLSKYSPEQPIYFGRRFKPYVKQGYMSGGAGYVLSKEALKRFVTAFKTNKCSHSSSIEDLALGKCMEIINVQAGDSRDTSGRETFHPFVPEHLLIRGYLPKTFWYWNYNYYPAVEGPGCCSDLAVSFHYVDSMTMYHLEYLVYHLRPYGYSYRYDPDSAKGLEEQNKNEAQEDNPKLKQKTSEN</sequence>
<gene>
    <name type="primary">C1GALT1</name>
    <name type="ORF">RCJMB04_17i7</name>
</gene>
<proteinExistence type="evidence at transcript level"/>
<feature type="chain" id="PRO_0000285067" description="Glycoprotein-N-acetylgalactosamine 3-beta-galactosyltransferase 1">
    <location>
        <begin position="1"/>
        <end position="366"/>
    </location>
</feature>
<feature type="topological domain" description="Cytoplasmic" evidence="5">
    <location>
        <begin position="1"/>
        <end position="10"/>
    </location>
</feature>
<feature type="transmembrane region" description="Helical; Signal-anchor for type II membrane protein" evidence="5">
    <location>
        <begin position="11"/>
        <end position="31"/>
    </location>
</feature>
<feature type="topological domain" description="Lumenal" evidence="5">
    <location>
        <begin position="32"/>
        <end position="366"/>
    </location>
</feature>
<feature type="region of interest" description="Disordered" evidence="6">
    <location>
        <begin position="341"/>
        <end position="366"/>
    </location>
</feature>
<feature type="binding site" evidence="2">
    <location>
        <position position="95"/>
    </location>
    <ligand>
        <name>UDP</name>
        <dbReference type="ChEBI" id="CHEBI:58223"/>
    </ligand>
</feature>
<feature type="binding site" evidence="2">
    <location>
        <position position="139"/>
    </location>
    <ligand>
        <name>UDP</name>
        <dbReference type="ChEBI" id="CHEBI:58223"/>
    </ligand>
</feature>
<feature type="binding site" evidence="2">
    <location>
        <position position="140"/>
    </location>
    <ligand>
        <name>UDP</name>
        <dbReference type="ChEBI" id="CHEBI:58223"/>
    </ligand>
</feature>
<feature type="binding site" evidence="2">
    <location>
        <position position="141"/>
    </location>
    <ligand>
        <name>UDP</name>
        <dbReference type="ChEBI" id="CHEBI:58223"/>
    </ligand>
</feature>
<feature type="binding site" evidence="2">
    <location>
        <position position="147"/>
    </location>
    <ligand>
        <name>UDP</name>
        <dbReference type="ChEBI" id="CHEBI:58223"/>
    </ligand>
</feature>
<feature type="binding site" evidence="2">
    <location>
        <position position="170"/>
    </location>
    <ligand>
        <name>Mn(2+)</name>
        <dbReference type="ChEBI" id="CHEBI:29035"/>
    </ligand>
</feature>
<feature type="binding site" evidence="2">
    <location>
        <position position="170"/>
    </location>
    <ligand>
        <name>UDP</name>
        <dbReference type="ChEBI" id="CHEBI:58223"/>
    </ligand>
</feature>
<feature type="binding site" evidence="2">
    <location>
        <position position="172"/>
    </location>
    <ligand>
        <name>Mn(2+)</name>
        <dbReference type="ChEBI" id="CHEBI:29035"/>
    </ligand>
</feature>
<feature type="binding site" evidence="2">
    <location>
        <position position="286"/>
    </location>
    <ligand>
        <name>a glycoprotein</name>
        <dbReference type="ChEBI" id="CHEBI:17089"/>
    </ligand>
</feature>
<feature type="binding site" evidence="2">
    <location>
        <position position="310"/>
    </location>
    <ligand>
        <name>Mn(2+)</name>
        <dbReference type="ChEBI" id="CHEBI:29035"/>
    </ligand>
</feature>
<feature type="binding site" evidence="2">
    <location>
        <position position="310"/>
    </location>
    <ligand>
        <name>UDP</name>
        <dbReference type="ChEBI" id="CHEBI:58223"/>
    </ligand>
</feature>
<feature type="binding site" evidence="2">
    <location>
        <position position="311"/>
    </location>
    <ligand>
        <name>UDP</name>
        <dbReference type="ChEBI" id="CHEBI:58223"/>
    </ligand>
</feature>
<feature type="disulfide bond" evidence="2">
    <location>
        <begin position="92"/>
        <end position="116"/>
    </location>
</feature>
<feature type="disulfide bond" evidence="2">
    <location>
        <begin position="233"/>
        <end position="247"/>
    </location>
</feature>
<feature type="disulfide bond" evidence="2">
    <location>
        <begin position="301"/>
        <end position="302"/>
    </location>
</feature>